<keyword id="KW-0030">Aminoacyl-tRNA synthetase</keyword>
<keyword id="KW-0067">ATP-binding</keyword>
<keyword id="KW-0963">Cytoplasm</keyword>
<keyword id="KW-0436">Ligase</keyword>
<keyword id="KW-0547">Nucleotide-binding</keyword>
<keyword id="KW-0648">Protein biosynthesis</keyword>
<gene>
    <name evidence="1" type="primary">glyQ</name>
    <name type="ordered locus">A1C_06585</name>
</gene>
<sequence>MKKLSFQQIILTLQNYWQDYGCGILQPYDAHVGAGTFHPATVLRCLGTKPWSVAYVQPSRRPGDSRYGMHPNRMQHYYQFQVILKPSPDDIQDLYLKNLECLGIDLKNHDIRFVEDDWESPTLGASGLGWEVWCDGMEVSQFTYMQQIGGIECRPVACEITYGLERLALYIQGVDVVKALDWNGQIGEKALKYGEVDFEAERQFSKYNLELADSKMLLRHFKDSEEQCERLVKANLPMPAYDECLKASHYFNQLNALGVISVTERASYVLRVRHLARICCMKWLELSGE</sequence>
<accession>A8GQ65</accession>
<feature type="chain" id="PRO_1000101219" description="Glycine--tRNA ligase alpha subunit">
    <location>
        <begin position="1"/>
        <end position="289"/>
    </location>
</feature>
<proteinExistence type="inferred from homology"/>
<dbReference type="EC" id="6.1.1.14" evidence="1"/>
<dbReference type="EMBL" id="CP000847">
    <property type="protein sequence ID" value="ABV75540.1"/>
    <property type="molecule type" value="Genomic_DNA"/>
</dbReference>
<dbReference type="RefSeq" id="WP_012150169.1">
    <property type="nucleotide sequence ID" value="NC_009881.1"/>
</dbReference>
<dbReference type="SMR" id="A8GQ65"/>
<dbReference type="STRING" id="293614.A1C_06585"/>
<dbReference type="KEGG" id="rak:A1C_06585"/>
<dbReference type="eggNOG" id="COG0752">
    <property type="taxonomic scope" value="Bacteria"/>
</dbReference>
<dbReference type="HOGENOM" id="CLU_057066_1_0_5"/>
<dbReference type="Proteomes" id="UP000006830">
    <property type="component" value="Chromosome"/>
</dbReference>
<dbReference type="GO" id="GO:0005829">
    <property type="term" value="C:cytosol"/>
    <property type="evidence" value="ECO:0007669"/>
    <property type="project" value="TreeGrafter"/>
</dbReference>
<dbReference type="GO" id="GO:0005524">
    <property type="term" value="F:ATP binding"/>
    <property type="evidence" value="ECO:0007669"/>
    <property type="project" value="UniProtKB-UniRule"/>
</dbReference>
<dbReference type="GO" id="GO:0004820">
    <property type="term" value="F:glycine-tRNA ligase activity"/>
    <property type="evidence" value="ECO:0007669"/>
    <property type="project" value="UniProtKB-UniRule"/>
</dbReference>
<dbReference type="GO" id="GO:0006426">
    <property type="term" value="P:glycyl-tRNA aminoacylation"/>
    <property type="evidence" value="ECO:0007669"/>
    <property type="project" value="UniProtKB-UniRule"/>
</dbReference>
<dbReference type="FunFam" id="3.30.930.10:FF:000006">
    <property type="entry name" value="Glycine--tRNA ligase alpha subunit"/>
    <property type="match status" value="1"/>
</dbReference>
<dbReference type="Gene3D" id="3.30.930.10">
    <property type="entry name" value="Bira Bifunctional Protein, Domain 2"/>
    <property type="match status" value="1"/>
</dbReference>
<dbReference type="Gene3D" id="1.20.58.180">
    <property type="entry name" value="Class II aaRS and biotin synthetases, domain 2"/>
    <property type="match status" value="1"/>
</dbReference>
<dbReference type="HAMAP" id="MF_00254">
    <property type="entry name" value="Gly_tRNA_synth_alpha"/>
    <property type="match status" value="1"/>
</dbReference>
<dbReference type="InterPro" id="IPR045864">
    <property type="entry name" value="aa-tRNA-synth_II/BPL/LPL"/>
</dbReference>
<dbReference type="InterPro" id="IPR006194">
    <property type="entry name" value="Gly-tRNA-synth_heterodimer"/>
</dbReference>
<dbReference type="InterPro" id="IPR002310">
    <property type="entry name" value="Gly-tRNA_ligase_asu"/>
</dbReference>
<dbReference type="NCBIfam" id="TIGR00388">
    <property type="entry name" value="glyQ"/>
    <property type="match status" value="1"/>
</dbReference>
<dbReference type="NCBIfam" id="NF006827">
    <property type="entry name" value="PRK09348.1"/>
    <property type="match status" value="1"/>
</dbReference>
<dbReference type="PANTHER" id="PTHR30075:SF2">
    <property type="entry name" value="GLYCINE--TRNA LIGASE, CHLOROPLASTIC_MITOCHONDRIAL 2"/>
    <property type="match status" value="1"/>
</dbReference>
<dbReference type="PANTHER" id="PTHR30075">
    <property type="entry name" value="GLYCYL-TRNA SYNTHETASE"/>
    <property type="match status" value="1"/>
</dbReference>
<dbReference type="Pfam" id="PF02091">
    <property type="entry name" value="tRNA-synt_2e"/>
    <property type="match status" value="1"/>
</dbReference>
<dbReference type="PRINTS" id="PR01044">
    <property type="entry name" value="TRNASYNTHGA"/>
</dbReference>
<dbReference type="SUPFAM" id="SSF55681">
    <property type="entry name" value="Class II aaRS and biotin synthetases"/>
    <property type="match status" value="1"/>
</dbReference>
<dbReference type="PROSITE" id="PS50861">
    <property type="entry name" value="AA_TRNA_LIGASE_II_GLYAB"/>
    <property type="match status" value="1"/>
</dbReference>
<protein>
    <recommendedName>
        <fullName evidence="1">Glycine--tRNA ligase alpha subunit</fullName>
        <ecNumber evidence="1">6.1.1.14</ecNumber>
    </recommendedName>
    <alternativeName>
        <fullName evidence="1">Glycyl-tRNA synthetase alpha subunit</fullName>
        <shortName evidence="1">GlyRS</shortName>
    </alternativeName>
</protein>
<evidence type="ECO:0000255" key="1">
    <source>
        <dbReference type="HAMAP-Rule" id="MF_00254"/>
    </source>
</evidence>
<comment type="catalytic activity">
    <reaction evidence="1">
        <text>tRNA(Gly) + glycine + ATP = glycyl-tRNA(Gly) + AMP + diphosphate</text>
        <dbReference type="Rhea" id="RHEA:16013"/>
        <dbReference type="Rhea" id="RHEA-COMP:9664"/>
        <dbReference type="Rhea" id="RHEA-COMP:9683"/>
        <dbReference type="ChEBI" id="CHEBI:30616"/>
        <dbReference type="ChEBI" id="CHEBI:33019"/>
        <dbReference type="ChEBI" id="CHEBI:57305"/>
        <dbReference type="ChEBI" id="CHEBI:78442"/>
        <dbReference type="ChEBI" id="CHEBI:78522"/>
        <dbReference type="ChEBI" id="CHEBI:456215"/>
        <dbReference type="EC" id="6.1.1.14"/>
    </reaction>
</comment>
<comment type="subunit">
    <text evidence="1">Tetramer of two alpha and two beta subunits.</text>
</comment>
<comment type="subcellular location">
    <subcellularLocation>
        <location evidence="1">Cytoplasm</location>
    </subcellularLocation>
</comment>
<comment type="similarity">
    <text evidence="1">Belongs to the class-II aminoacyl-tRNA synthetase family.</text>
</comment>
<reference key="1">
    <citation type="submission" date="2007-09" db="EMBL/GenBank/DDBJ databases">
        <title>Complete genome sequence of Rickettsia akari.</title>
        <authorList>
            <person name="Madan A."/>
            <person name="Fahey J."/>
            <person name="Helton E."/>
            <person name="Ketteman M."/>
            <person name="Madan A."/>
            <person name="Rodrigues S."/>
            <person name="Sanchez A."/>
            <person name="Whiting M."/>
            <person name="Dasch G."/>
            <person name="Eremeeva M."/>
        </authorList>
    </citation>
    <scope>NUCLEOTIDE SEQUENCE [LARGE SCALE GENOMIC DNA]</scope>
    <source>
        <strain>Hartford</strain>
    </source>
</reference>
<name>SYGA_RICAH</name>
<organism>
    <name type="scientific">Rickettsia akari (strain Hartford)</name>
    <dbReference type="NCBI Taxonomy" id="293614"/>
    <lineage>
        <taxon>Bacteria</taxon>
        <taxon>Pseudomonadati</taxon>
        <taxon>Pseudomonadota</taxon>
        <taxon>Alphaproteobacteria</taxon>
        <taxon>Rickettsiales</taxon>
        <taxon>Rickettsiaceae</taxon>
        <taxon>Rickettsieae</taxon>
        <taxon>Rickettsia</taxon>
        <taxon>spotted fever group</taxon>
    </lineage>
</organism>